<gene>
    <name evidence="1" type="primary">rpsF</name>
    <name type="ordered locus">PA0152</name>
</gene>
<accession>B1V955</accession>
<evidence type="ECO:0000255" key="1">
    <source>
        <dbReference type="HAMAP-Rule" id="MF_00360"/>
    </source>
</evidence>
<evidence type="ECO:0000305" key="2"/>
<comment type="function">
    <text evidence="1">Binds together with bS18 to 16S ribosomal RNA.</text>
</comment>
<comment type="similarity">
    <text evidence="1">Belongs to the bacterial ribosomal protein bS6 family.</text>
</comment>
<proteinExistence type="inferred from homology"/>
<sequence>MKKYEIMYILRPNLDNNEVKKINDHLESVFSKKPSTILEKKEIGLKDLAYPINNHKKGYYYWFITQTDNEAVLEFNRIVKITEEVIRFIIIKE</sequence>
<reference key="1">
    <citation type="journal article" date="2008" name="J. Bacteriol.">
        <title>Comparative genome analysis of 'Candidatus Phytoplasma australiense' (subgroup tuf-Australia I; rp-A) and 'Ca. Phytoplasma asteris' strains OY-M and AY-WB.</title>
        <authorList>
            <person name="Tran-Nguyen L.T."/>
            <person name="Kube M."/>
            <person name="Schneider B."/>
            <person name="Reinhardt R."/>
            <person name="Gibb K.S."/>
        </authorList>
    </citation>
    <scope>NUCLEOTIDE SEQUENCE [LARGE SCALE GENOMIC DNA]</scope>
</reference>
<keyword id="KW-1185">Reference proteome</keyword>
<keyword id="KW-0687">Ribonucleoprotein</keyword>
<keyword id="KW-0689">Ribosomal protein</keyword>
<keyword id="KW-0694">RNA-binding</keyword>
<keyword id="KW-0699">rRNA-binding</keyword>
<name>RS6_PHYAS</name>
<dbReference type="EMBL" id="AM422018">
    <property type="protein sequence ID" value="CAM11487.1"/>
    <property type="molecule type" value="Genomic_DNA"/>
</dbReference>
<dbReference type="SMR" id="B1V955"/>
<dbReference type="STRING" id="59748.PA0152"/>
<dbReference type="KEGG" id="pal:PA0152"/>
<dbReference type="eggNOG" id="COG0360">
    <property type="taxonomic scope" value="Bacteria"/>
</dbReference>
<dbReference type="Proteomes" id="UP000008323">
    <property type="component" value="Chromosome"/>
</dbReference>
<dbReference type="GO" id="GO:0005737">
    <property type="term" value="C:cytoplasm"/>
    <property type="evidence" value="ECO:0007669"/>
    <property type="project" value="UniProtKB-ARBA"/>
</dbReference>
<dbReference type="GO" id="GO:1990904">
    <property type="term" value="C:ribonucleoprotein complex"/>
    <property type="evidence" value="ECO:0007669"/>
    <property type="project" value="UniProtKB-KW"/>
</dbReference>
<dbReference type="GO" id="GO:0005840">
    <property type="term" value="C:ribosome"/>
    <property type="evidence" value="ECO:0007669"/>
    <property type="project" value="UniProtKB-KW"/>
</dbReference>
<dbReference type="GO" id="GO:0070181">
    <property type="term" value="F:small ribosomal subunit rRNA binding"/>
    <property type="evidence" value="ECO:0007669"/>
    <property type="project" value="TreeGrafter"/>
</dbReference>
<dbReference type="GO" id="GO:0003735">
    <property type="term" value="F:structural constituent of ribosome"/>
    <property type="evidence" value="ECO:0007669"/>
    <property type="project" value="InterPro"/>
</dbReference>
<dbReference type="GO" id="GO:0006412">
    <property type="term" value="P:translation"/>
    <property type="evidence" value="ECO:0007669"/>
    <property type="project" value="UniProtKB-UniRule"/>
</dbReference>
<dbReference type="CDD" id="cd00473">
    <property type="entry name" value="bS6"/>
    <property type="match status" value="1"/>
</dbReference>
<dbReference type="Gene3D" id="3.30.70.60">
    <property type="match status" value="1"/>
</dbReference>
<dbReference type="HAMAP" id="MF_00360">
    <property type="entry name" value="Ribosomal_bS6"/>
    <property type="match status" value="1"/>
</dbReference>
<dbReference type="InterPro" id="IPR000529">
    <property type="entry name" value="Ribosomal_bS6"/>
</dbReference>
<dbReference type="InterPro" id="IPR020815">
    <property type="entry name" value="Ribosomal_bS6_CS"/>
</dbReference>
<dbReference type="InterPro" id="IPR035980">
    <property type="entry name" value="Ribosomal_bS6_sf"/>
</dbReference>
<dbReference type="InterPro" id="IPR020814">
    <property type="entry name" value="Ribosomal_S6_plastid/chlpt"/>
</dbReference>
<dbReference type="InterPro" id="IPR014717">
    <property type="entry name" value="Transl_elong_EF1B/ribsomal_bS6"/>
</dbReference>
<dbReference type="NCBIfam" id="TIGR00166">
    <property type="entry name" value="S6"/>
    <property type="match status" value="1"/>
</dbReference>
<dbReference type="PANTHER" id="PTHR21011">
    <property type="entry name" value="MITOCHONDRIAL 28S RIBOSOMAL PROTEIN S6"/>
    <property type="match status" value="1"/>
</dbReference>
<dbReference type="PANTHER" id="PTHR21011:SF1">
    <property type="entry name" value="SMALL RIBOSOMAL SUBUNIT PROTEIN BS6M"/>
    <property type="match status" value="1"/>
</dbReference>
<dbReference type="Pfam" id="PF01250">
    <property type="entry name" value="Ribosomal_S6"/>
    <property type="match status" value="1"/>
</dbReference>
<dbReference type="SUPFAM" id="SSF54995">
    <property type="entry name" value="Ribosomal protein S6"/>
    <property type="match status" value="1"/>
</dbReference>
<dbReference type="PROSITE" id="PS01048">
    <property type="entry name" value="RIBOSOMAL_S6"/>
    <property type="match status" value="1"/>
</dbReference>
<protein>
    <recommendedName>
        <fullName evidence="1">Small ribosomal subunit protein bS6</fullName>
    </recommendedName>
    <alternativeName>
        <fullName evidence="2">30S ribosomal protein S6</fullName>
    </alternativeName>
</protein>
<organism>
    <name type="scientific">Phytoplasma australiense</name>
    <dbReference type="NCBI Taxonomy" id="59748"/>
    <lineage>
        <taxon>Bacteria</taxon>
        <taxon>Bacillati</taxon>
        <taxon>Mycoplasmatota</taxon>
        <taxon>Mollicutes</taxon>
        <taxon>Acholeplasmatales</taxon>
        <taxon>Acholeplasmataceae</taxon>
        <taxon>Candidatus Phytoplasma</taxon>
        <taxon>16SrXII (Stolbur group)</taxon>
    </lineage>
</organism>
<feature type="chain" id="PRO_1000120784" description="Small ribosomal subunit protein bS6">
    <location>
        <begin position="1"/>
        <end position="93"/>
    </location>
</feature>